<evidence type="ECO:0000250" key="1"/>
<evidence type="ECO:0000305" key="2"/>
<evidence type="ECO:0000305" key="3">
    <source>
    </source>
</evidence>
<dbReference type="EMBL" id="FJ411288">
    <property type="protein sequence ID" value="ACR83849.1"/>
    <property type="molecule type" value="mRNA"/>
</dbReference>
<dbReference type="SMR" id="E3P6P3"/>
<dbReference type="MEROPS" id="I25.012"/>
<dbReference type="GO" id="GO:0070062">
    <property type="term" value="C:extracellular exosome"/>
    <property type="evidence" value="ECO:0007669"/>
    <property type="project" value="TreeGrafter"/>
</dbReference>
<dbReference type="GO" id="GO:0004869">
    <property type="term" value="F:cysteine-type endopeptidase inhibitor activity"/>
    <property type="evidence" value="ECO:0007669"/>
    <property type="project" value="UniProtKB-KW"/>
</dbReference>
<dbReference type="CDD" id="cd00042">
    <property type="entry name" value="CY"/>
    <property type="match status" value="1"/>
</dbReference>
<dbReference type="FunFam" id="3.10.450.10:FF:000004">
    <property type="entry name" value="Cystatin C"/>
    <property type="match status" value="1"/>
</dbReference>
<dbReference type="Gene3D" id="3.10.450.10">
    <property type="match status" value="1"/>
</dbReference>
<dbReference type="InterPro" id="IPR000010">
    <property type="entry name" value="Cystatin_dom"/>
</dbReference>
<dbReference type="InterPro" id="IPR046350">
    <property type="entry name" value="Cystatin_sf"/>
</dbReference>
<dbReference type="InterPro" id="IPR018073">
    <property type="entry name" value="Prot_inh_cystat_CS"/>
</dbReference>
<dbReference type="PANTHER" id="PTHR47033">
    <property type="entry name" value="CYSTATIN-M"/>
    <property type="match status" value="1"/>
</dbReference>
<dbReference type="PANTHER" id="PTHR47033:SF1">
    <property type="entry name" value="CYSTATIN-M"/>
    <property type="match status" value="1"/>
</dbReference>
<dbReference type="Pfam" id="PF00031">
    <property type="entry name" value="Cystatin"/>
    <property type="match status" value="1"/>
</dbReference>
<dbReference type="SMART" id="SM00043">
    <property type="entry name" value="CY"/>
    <property type="match status" value="1"/>
</dbReference>
<dbReference type="SUPFAM" id="SSF54403">
    <property type="entry name" value="Cystatin/monellin"/>
    <property type="match status" value="1"/>
</dbReference>
<dbReference type="PROSITE" id="PS00287">
    <property type="entry name" value="CYSTATIN"/>
    <property type="match status" value="1"/>
</dbReference>
<proteinExistence type="evidence at protein level"/>
<feature type="signal peptide" evidence="1">
    <location>
        <begin position="1"/>
        <end position="26"/>
    </location>
</feature>
<feature type="chain" id="PRO_5000654429" description="Cystatin">
    <location>
        <begin position="27"/>
        <end position="141"/>
    </location>
</feature>
<feature type="domain" description="Cystatin">
    <location>
        <begin position="29"/>
        <end position="129"/>
    </location>
</feature>
<feature type="short sequence motif" description="Secondary area of contact" evidence="1">
    <location>
        <begin position="73"/>
        <end position="77"/>
    </location>
</feature>
<feature type="site" description="Reactive site" evidence="1">
    <location>
        <position position="29"/>
    </location>
</feature>
<feature type="disulfide bond" evidence="1">
    <location>
        <begin position="91"/>
        <end position="107"/>
    </location>
</feature>
<feature type="disulfide bond" evidence="1">
    <location>
        <begin position="120"/>
        <end position="140"/>
    </location>
</feature>
<sequence>MVRSQLPVAAPLRLLCALLLLPSATMIPGGLSPRSVTDPDVQEAAAFSVQEYNALSANAYYYKELRIVEAQSQVVSGAKYYLTMELMKTKCAKATSKPKVYKEIQNCELPPKAQQEKLTCHFQVWSRPWLEKMELTKMSCN</sequence>
<accession>E3P6P3</accession>
<keyword id="KW-1015">Disulfide bond</keyword>
<keyword id="KW-0646">Protease inhibitor</keyword>
<keyword id="KW-0964">Secreted</keyword>
<keyword id="KW-0732">Signal</keyword>
<keyword id="KW-0789">Thiol protease inhibitor</keyword>
<organism>
    <name type="scientific">Micropechis ikaheca</name>
    <name type="common">New Guinean small-eyed snake</name>
    <dbReference type="NCBI Taxonomy" id="66188"/>
    <lineage>
        <taxon>Eukaryota</taxon>
        <taxon>Metazoa</taxon>
        <taxon>Chordata</taxon>
        <taxon>Craniata</taxon>
        <taxon>Vertebrata</taxon>
        <taxon>Euteleostomi</taxon>
        <taxon>Lepidosauria</taxon>
        <taxon>Squamata</taxon>
        <taxon>Bifurcata</taxon>
        <taxon>Unidentata</taxon>
        <taxon>Episquamata</taxon>
        <taxon>Toxicofera</taxon>
        <taxon>Serpentes</taxon>
        <taxon>Colubroidea</taxon>
        <taxon>Elapidae</taxon>
        <taxon>Notechinae</taxon>
        <taxon>Micropechis</taxon>
    </lineage>
</organism>
<protein>
    <recommendedName>
        <fullName>Cystatin</fullName>
    </recommendedName>
</protein>
<comment type="function">
    <text evidence="1">Inhibits various C1 cysteine proteases including cathepsin L, papain and cathepsin B. This protein has no toxic activity and its function in the venom is unknown. It may play a role as a housekeeping or regulatory protein (By similarity).</text>
</comment>
<comment type="subcellular location">
    <subcellularLocation>
        <location>Secreted</location>
    </subcellularLocation>
</comment>
<comment type="tissue specificity">
    <text evidence="3">Expressed at a low level by the venom gland (at protein level).</text>
</comment>
<comment type="miscellaneous">
    <text evidence="1">Negative results: the recombinant protein does not inhibit calpain-1 (CAPN1), a C2 family cysteine protease and legumain (LGMN), a C13 family cysteine protease. Does not provoke cell death (PC3 prostate cancer cells) (By similarity).</text>
</comment>
<comment type="similarity">
    <text evidence="2">Belongs to the cystatin family.</text>
</comment>
<name>CYT_MICIK</name>
<reference key="1">
    <citation type="journal article" date="2011" name="Biochimie">
        <title>Cloning and characterisation of novel cystatins from elapid snake venom glands.</title>
        <authorList>
            <person name="Richards R."/>
            <person name="St Pierre L."/>
            <person name="Trabi M."/>
            <person name="Johnson L.A."/>
            <person name="de Jersey J."/>
            <person name="Masci P.P."/>
            <person name="Lavin M.F."/>
        </authorList>
    </citation>
    <scope>NUCLEOTIDE SEQUENCE [MRNA]</scope>
    <scope>LEVEL OF PROTEIN EXPRESSION</scope>
    <source>
        <tissue>Venom</tissue>
        <tissue>Venom gland</tissue>
    </source>
</reference>